<sequence>MSLKDRFDRFIDYFTEDEDSSLPYEKRDEPVFTSVNSSQEPALPMNQPSQSAGTKENNITRLHARQQELANQSQRATDKVIIDVRYPRKYEDATEIVDLLAGNESILIDFQYMTEVQARRCLDYLDGACHVLAGNLKKVASTMYLLTPVNVIVNVEDIRLPDEDQQGEFGFDMKRNRVR</sequence>
<comment type="function">
    <text evidence="1">Cell division protein that is part of the divisome complex and is recruited early to the Z-ring. Probably stimulates Z-ring formation, perhaps through the cross-linking of FtsZ protofilaments. Its function overlaps with FtsA.</text>
</comment>
<comment type="subunit">
    <text evidence="1">Homodimer. Interacts with FtsZ.</text>
</comment>
<comment type="subcellular location">
    <subcellularLocation>
        <location evidence="1">Cytoplasm</location>
    </subcellularLocation>
    <text evidence="1">Localizes to the division site, in a FtsZ-dependent manner.</text>
</comment>
<comment type="similarity">
    <text evidence="1">Belongs to the SepF family.</text>
</comment>
<dbReference type="EMBL" id="CP000921">
    <property type="protein sequence ID" value="ACO23061.1"/>
    <property type="molecule type" value="Genomic_DNA"/>
</dbReference>
<dbReference type="RefSeq" id="WP_000053388.1">
    <property type="nucleotide sequence ID" value="NC_012469.1"/>
</dbReference>
<dbReference type="SMR" id="C1CSS9"/>
<dbReference type="KEGG" id="snt:SPT_1603"/>
<dbReference type="HOGENOM" id="CLU_078499_2_0_9"/>
<dbReference type="GO" id="GO:0005737">
    <property type="term" value="C:cytoplasm"/>
    <property type="evidence" value="ECO:0007669"/>
    <property type="project" value="UniProtKB-SubCell"/>
</dbReference>
<dbReference type="GO" id="GO:0000917">
    <property type="term" value="P:division septum assembly"/>
    <property type="evidence" value="ECO:0007669"/>
    <property type="project" value="UniProtKB-KW"/>
</dbReference>
<dbReference type="GO" id="GO:0043093">
    <property type="term" value="P:FtsZ-dependent cytokinesis"/>
    <property type="evidence" value="ECO:0007669"/>
    <property type="project" value="UniProtKB-UniRule"/>
</dbReference>
<dbReference type="Gene3D" id="3.30.110.150">
    <property type="entry name" value="SepF-like protein"/>
    <property type="match status" value="1"/>
</dbReference>
<dbReference type="HAMAP" id="MF_01197">
    <property type="entry name" value="SepF"/>
    <property type="match status" value="1"/>
</dbReference>
<dbReference type="InterPro" id="IPR023052">
    <property type="entry name" value="Cell_div_SepF"/>
</dbReference>
<dbReference type="InterPro" id="IPR007561">
    <property type="entry name" value="Cell_div_SepF/SepF-rel"/>
</dbReference>
<dbReference type="InterPro" id="IPR038594">
    <property type="entry name" value="SepF-like_sf"/>
</dbReference>
<dbReference type="PANTHER" id="PTHR35798">
    <property type="entry name" value="CELL DIVISION PROTEIN SEPF"/>
    <property type="match status" value="1"/>
</dbReference>
<dbReference type="PANTHER" id="PTHR35798:SF1">
    <property type="entry name" value="CELL DIVISION PROTEIN SEPF"/>
    <property type="match status" value="1"/>
</dbReference>
<dbReference type="Pfam" id="PF04472">
    <property type="entry name" value="SepF"/>
    <property type="match status" value="1"/>
</dbReference>
<feature type="chain" id="PRO_1000164548" description="Cell division protein SepF">
    <location>
        <begin position="1"/>
        <end position="179"/>
    </location>
</feature>
<feature type="region of interest" description="Disordered" evidence="2">
    <location>
        <begin position="22"/>
        <end position="55"/>
    </location>
</feature>
<feature type="compositionally biased region" description="Polar residues" evidence="2">
    <location>
        <begin position="33"/>
        <end position="55"/>
    </location>
</feature>
<keyword id="KW-0131">Cell cycle</keyword>
<keyword id="KW-0132">Cell division</keyword>
<keyword id="KW-0963">Cytoplasm</keyword>
<keyword id="KW-0717">Septation</keyword>
<accession>C1CSS9</accession>
<gene>
    <name evidence="1" type="primary">sepF</name>
    <name type="ordered locus">SPT_1603</name>
</gene>
<proteinExistence type="inferred from homology"/>
<organism>
    <name type="scientific">Streptococcus pneumoniae (strain Taiwan19F-14)</name>
    <dbReference type="NCBI Taxonomy" id="487213"/>
    <lineage>
        <taxon>Bacteria</taxon>
        <taxon>Bacillati</taxon>
        <taxon>Bacillota</taxon>
        <taxon>Bacilli</taxon>
        <taxon>Lactobacillales</taxon>
        <taxon>Streptococcaceae</taxon>
        <taxon>Streptococcus</taxon>
    </lineage>
</organism>
<reference key="1">
    <citation type="journal article" date="2010" name="Genome Biol.">
        <title>Structure and dynamics of the pan-genome of Streptococcus pneumoniae and closely related species.</title>
        <authorList>
            <person name="Donati C."/>
            <person name="Hiller N.L."/>
            <person name="Tettelin H."/>
            <person name="Muzzi A."/>
            <person name="Croucher N.J."/>
            <person name="Angiuoli S.V."/>
            <person name="Oggioni M."/>
            <person name="Dunning Hotopp J.C."/>
            <person name="Hu F.Z."/>
            <person name="Riley D.R."/>
            <person name="Covacci A."/>
            <person name="Mitchell T.J."/>
            <person name="Bentley S.D."/>
            <person name="Kilian M."/>
            <person name="Ehrlich G.D."/>
            <person name="Rappuoli R."/>
            <person name="Moxon E.R."/>
            <person name="Masignani V."/>
        </authorList>
    </citation>
    <scope>NUCLEOTIDE SEQUENCE [LARGE SCALE GENOMIC DNA]</scope>
    <source>
        <strain>Taiwan19F-14</strain>
    </source>
</reference>
<name>SEPF_STRZT</name>
<evidence type="ECO:0000255" key="1">
    <source>
        <dbReference type="HAMAP-Rule" id="MF_01197"/>
    </source>
</evidence>
<evidence type="ECO:0000256" key="2">
    <source>
        <dbReference type="SAM" id="MobiDB-lite"/>
    </source>
</evidence>
<protein>
    <recommendedName>
        <fullName evidence="1">Cell division protein SepF</fullName>
    </recommendedName>
</protein>